<evidence type="ECO:0000250" key="1"/>
<evidence type="ECO:0000305" key="2"/>
<proteinExistence type="inferred from homology"/>
<keyword id="KW-0464">Manganese</keyword>
<keyword id="KW-0479">Metal-binding</keyword>
<keyword id="KW-0560">Oxidoreductase</keyword>
<keyword id="KW-1185">Reference proteome</keyword>
<sequence>MTYQLPELGYAYDALEPYFDKETMEIHHSKHHQAYVNNSNALLEKHPELLEKCPGALLKDLTQVPAEKRTAVRNNLGGHVNHTLFWKGLKTGTTLQGALKDAIIRDFGSVEAFQAEFEQAAATRFGSGWAWLVLEEGKLAVVSTANQDSPIMGKDVAGVSGYPIFTLDVWEHAYYLHYQNRRPDYIKAFWNVVNWDEASRRFEEKQAGCGCTK</sequence>
<dbReference type="EC" id="1.15.1.1"/>
<dbReference type="EMBL" id="AF017750">
    <property type="protein sequence ID" value="AAC46219.1"/>
    <property type="molecule type" value="Genomic_DNA"/>
</dbReference>
<dbReference type="EMBL" id="AE017143">
    <property type="protein sequence ID" value="AAP95298.1"/>
    <property type="molecule type" value="Genomic_DNA"/>
</dbReference>
<dbReference type="PIR" id="JC6542">
    <property type="entry name" value="JC6542"/>
</dbReference>
<dbReference type="RefSeq" id="WP_010944351.1">
    <property type="nucleotide sequence ID" value="NC_002940.2"/>
</dbReference>
<dbReference type="SMR" id="O30826"/>
<dbReference type="STRING" id="233412.HD_0321"/>
<dbReference type="GeneID" id="60733624"/>
<dbReference type="KEGG" id="hdu:HD_0321"/>
<dbReference type="eggNOG" id="COG0605">
    <property type="taxonomic scope" value="Bacteria"/>
</dbReference>
<dbReference type="HOGENOM" id="CLU_031625_0_1_6"/>
<dbReference type="OrthoDB" id="9803125at2"/>
<dbReference type="Proteomes" id="UP000001022">
    <property type="component" value="Chromosome"/>
</dbReference>
<dbReference type="GO" id="GO:0005737">
    <property type="term" value="C:cytoplasm"/>
    <property type="evidence" value="ECO:0007669"/>
    <property type="project" value="TreeGrafter"/>
</dbReference>
<dbReference type="GO" id="GO:0046872">
    <property type="term" value="F:metal ion binding"/>
    <property type="evidence" value="ECO:0007669"/>
    <property type="project" value="UniProtKB-KW"/>
</dbReference>
<dbReference type="GO" id="GO:0004784">
    <property type="term" value="F:superoxide dismutase activity"/>
    <property type="evidence" value="ECO:0007669"/>
    <property type="project" value="UniProtKB-EC"/>
</dbReference>
<dbReference type="FunFam" id="1.10.287.990:FF:000001">
    <property type="entry name" value="Superoxide dismutase"/>
    <property type="match status" value="1"/>
</dbReference>
<dbReference type="FunFam" id="3.55.40.20:FF:000001">
    <property type="entry name" value="Superoxide dismutase"/>
    <property type="match status" value="1"/>
</dbReference>
<dbReference type="Gene3D" id="1.10.287.990">
    <property type="entry name" value="Fe,Mn superoxide dismutase (SOD) domain"/>
    <property type="match status" value="1"/>
</dbReference>
<dbReference type="Gene3D" id="3.55.40.20">
    <property type="entry name" value="Iron/manganese superoxide dismutase, C-terminal domain"/>
    <property type="match status" value="1"/>
</dbReference>
<dbReference type="InterPro" id="IPR001189">
    <property type="entry name" value="Mn/Fe_SOD"/>
</dbReference>
<dbReference type="InterPro" id="IPR019833">
    <property type="entry name" value="Mn/Fe_SOD_BS"/>
</dbReference>
<dbReference type="InterPro" id="IPR019832">
    <property type="entry name" value="Mn/Fe_SOD_C"/>
</dbReference>
<dbReference type="InterPro" id="IPR019831">
    <property type="entry name" value="Mn/Fe_SOD_N"/>
</dbReference>
<dbReference type="InterPro" id="IPR036324">
    <property type="entry name" value="Mn/Fe_SOD_N_sf"/>
</dbReference>
<dbReference type="InterPro" id="IPR036314">
    <property type="entry name" value="SOD_C_sf"/>
</dbReference>
<dbReference type="NCBIfam" id="NF008177">
    <property type="entry name" value="PRK10925.1"/>
    <property type="match status" value="1"/>
</dbReference>
<dbReference type="PANTHER" id="PTHR43595">
    <property type="entry name" value="37S RIBOSOMAL PROTEIN S26, MITOCHONDRIAL"/>
    <property type="match status" value="1"/>
</dbReference>
<dbReference type="PANTHER" id="PTHR43595:SF2">
    <property type="entry name" value="SMALL RIBOSOMAL SUBUNIT PROTEIN MS42"/>
    <property type="match status" value="1"/>
</dbReference>
<dbReference type="Pfam" id="PF02777">
    <property type="entry name" value="Sod_Fe_C"/>
    <property type="match status" value="1"/>
</dbReference>
<dbReference type="Pfam" id="PF00081">
    <property type="entry name" value="Sod_Fe_N"/>
    <property type="match status" value="1"/>
</dbReference>
<dbReference type="PIRSF" id="PIRSF000349">
    <property type="entry name" value="SODismutase"/>
    <property type="match status" value="1"/>
</dbReference>
<dbReference type="PRINTS" id="PR01703">
    <property type="entry name" value="MNSODISMTASE"/>
</dbReference>
<dbReference type="SUPFAM" id="SSF54719">
    <property type="entry name" value="Fe,Mn superoxide dismutase (SOD), C-terminal domain"/>
    <property type="match status" value="1"/>
</dbReference>
<dbReference type="SUPFAM" id="SSF46609">
    <property type="entry name" value="Fe,Mn superoxide dismutase (SOD), N-terminal domain"/>
    <property type="match status" value="1"/>
</dbReference>
<dbReference type="PROSITE" id="PS00088">
    <property type="entry name" value="SOD_MN"/>
    <property type="match status" value="1"/>
</dbReference>
<feature type="initiator methionine" description="Removed" evidence="1">
    <location>
        <position position="1"/>
    </location>
</feature>
<feature type="chain" id="PRO_0000160039" description="Superoxide dismutase [Mn]">
    <location>
        <begin position="2"/>
        <end position="213"/>
    </location>
</feature>
<feature type="binding site" evidence="1">
    <location>
        <position position="27"/>
    </location>
    <ligand>
        <name>Mn(2+)</name>
        <dbReference type="ChEBI" id="CHEBI:29035"/>
    </ligand>
</feature>
<feature type="binding site" evidence="1">
    <location>
        <position position="82"/>
    </location>
    <ligand>
        <name>Mn(2+)</name>
        <dbReference type="ChEBI" id="CHEBI:29035"/>
    </ligand>
</feature>
<feature type="binding site" evidence="1">
    <location>
        <position position="168"/>
    </location>
    <ligand>
        <name>Mn(2+)</name>
        <dbReference type="ChEBI" id="CHEBI:29035"/>
    </ligand>
</feature>
<feature type="binding site" evidence="1">
    <location>
        <position position="172"/>
    </location>
    <ligand>
        <name>Mn(2+)</name>
        <dbReference type="ChEBI" id="CHEBI:29035"/>
    </ligand>
</feature>
<feature type="sequence conflict" description="In Ref. 1; AAC46219." evidence="2" ref="1">
    <original>E</original>
    <variation>K</variation>
    <location>
        <position position="111"/>
    </location>
</feature>
<comment type="function">
    <text>Destroys superoxide anion radicals which are normally produced within the cells and which are toxic to biological systems.</text>
</comment>
<comment type="catalytic activity">
    <reaction>
        <text>2 superoxide + 2 H(+) = H2O2 + O2</text>
        <dbReference type="Rhea" id="RHEA:20696"/>
        <dbReference type="ChEBI" id="CHEBI:15378"/>
        <dbReference type="ChEBI" id="CHEBI:15379"/>
        <dbReference type="ChEBI" id="CHEBI:16240"/>
        <dbReference type="ChEBI" id="CHEBI:18421"/>
        <dbReference type="EC" id="1.15.1.1"/>
    </reaction>
</comment>
<comment type="activity regulation">
    <text>Inhibited by hydrogen peroxide.</text>
</comment>
<comment type="subunit">
    <text evidence="1">Homodimer.</text>
</comment>
<comment type="similarity">
    <text evidence="2">Belongs to the iron/manganese superoxide dismutase family.</text>
</comment>
<reference key="1">
    <citation type="journal article" date="1998" name="Gene">
        <title>The sodA gene of Haemophilus ducreyi encodes a hydrogen peroxide-inhibitable superoxide dismutase.</title>
        <authorList>
            <person name="San Mateo L.R."/>
            <person name="Toffer K.L."/>
            <person name="Kawula T.H."/>
        </authorList>
    </citation>
    <scope>NUCLEOTIDE SEQUENCE [GENOMIC DNA]</scope>
    <source>
        <strain>35000HP / ATCC 700724</strain>
    </source>
</reference>
<reference key="2">
    <citation type="submission" date="2003-06" db="EMBL/GenBank/DDBJ databases">
        <title>The complete genome sequence of Haemophilus ducreyi.</title>
        <authorList>
            <person name="Munson R.S. Jr."/>
            <person name="Ray W.C."/>
            <person name="Mahairas G."/>
            <person name="Sabo P."/>
            <person name="Mungur R."/>
            <person name="Johnson L."/>
            <person name="Nguyen D."/>
            <person name="Wang J."/>
            <person name="Forst C."/>
            <person name="Hood L."/>
        </authorList>
    </citation>
    <scope>NUCLEOTIDE SEQUENCE [LARGE SCALE GENOMIC DNA]</scope>
    <source>
        <strain>35000HP / ATCC 700724</strain>
    </source>
</reference>
<gene>
    <name type="primary">sodA</name>
    <name type="ordered locus">HD_0321</name>
</gene>
<accession>O30826</accession>
<organism>
    <name type="scientific">Haemophilus ducreyi (strain 35000HP / ATCC 700724)</name>
    <dbReference type="NCBI Taxonomy" id="233412"/>
    <lineage>
        <taxon>Bacteria</taxon>
        <taxon>Pseudomonadati</taxon>
        <taxon>Pseudomonadota</taxon>
        <taxon>Gammaproteobacteria</taxon>
        <taxon>Pasteurellales</taxon>
        <taxon>Pasteurellaceae</taxon>
        <taxon>Haemophilus</taxon>
    </lineage>
</organism>
<name>SODM_HAEDU</name>
<protein>
    <recommendedName>
        <fullName>Superoxide dismutase [Mn]</fullName>
        <ecNumber>1.15.1.1</ecNumber>
    </recommendedName>
</protein>